<gene>
    <name type="primary">RB</name>
</gene>
<organism>
    <name type="scientific">Scutellaria baicalensis</name>
    <name type="common">Baical skullcap</name>
    <dbReference type="NCBI Taxonomy" id="65409"/>
    <lineage>
        <taxon>Eukaryota</taxon>
        <taxon>Viridiplantae</taxon>
        <taxon>Streptophyta</taxon>
        <taxon>Embryophyta</taxon>
        <taxon>Tracheophyta</taxon>
        <taxon>Spermatophyta</taxon>
        <taxon>Magnoliopsida</taxon>
        <taxon>eudicotyledons</taxon>
        <taxon>Gunneridae</taxon>
        <taxon>Pentapetalae</taxon>
        <taxon>asterids</taxon>
        <taxon>lamiids</taxon>
        <taxon>Lamiales</taxon>
        <taxon>Lamiaceae</taxon>
        <taxon>Scutellarioideae</taxon>
        <taxon>Scutellaria</taxon>
    </lineage>
</organism>
<reference key="1">
    <citation type="submission" date="2005-02" db="EMBL/GenBank/DDBJ databases">
        <title>The genes involved in hypersensitive responses and cell proliferation in Scutellaria baicalensis.</title>
        <authorList>
            <person name="Shoyama Y."/>
            <person name="Morimoto S."/>
            <person name="Taura F."/>
        </authorList>
    </citation>
    <scope>NUCLEOTIDE SEQUENCE [MRNA]</scope>
</reference>
<keyword id="KW-0131">Cell cycle</keyword>
<keyword id="KW-0539">Nucleus</keyword>
<keyword id="KW-0678">Repressor</keyword>
<keyword id="KW-0804">Transcription</keyword>
<keyword id="KW-0805">Transcription regulation</keyword>
<dbReference type="EMBL" id="AB205136">
    <property type="protein sequence ID" value="BAE06273.1"/>
    <property type="molecule type" value="mRNA"/>
</dbReference>
<dbReference type="SMR" id="Q4JF75"/>
<dbReference type="GO" id="GO:0000785">
    <property type="term" value="C:chromatin"/>
    <property type="evidence" value="ECO:0007669"/>
    <property type="project" value="TreeGrafter"/>
</dbReference>
<dbReference type="GO" id="GO:0005634">
    <property type="term" value="C:nucleus"/>
    <property type="evidence" value="ECO:0007669"/>
    <property type="project" value="UniProtKB-SubCell"/>
</dbReference>
<dbReference type="GO" id="GO:0005667">
    <property type="term" value="C:transcription regulator complex"/>
    <property type="evidence" value="ECO:0007669"/>
    <property type="project" value="TreeGrafter"/>
</dbReference>
<dbReference type="GO" id="GO:0000977">
    <property type="term" value="F:RNA polymerase II transcription regulatory region sequence-specific DNA binding"/>
    <property type="evidence" value="ECO:0007669"/>
    <property type="project" value="TreeGrafter"/>
</dbReference>
<dbReference type="GO" id="GO:0030154">
    <property type="term" value="P:cell differentiation"/>
    <property type="evidence" value="ECO:0007669"/>
    <property type="project" value="TreeGrafter"/>
</dbReference>
<dbReference type="GO" id="GO:2000134">
    <property type="term" value="P:negative regulation of G1/S transition of mitotic cell cycle"/>
    <property type="evidence" value="ECO:0007669"/>
    <property type="project" value="TreeGrafter"/>
</dbReference>
<dbReference type="GO" id="GO:0006357">
    <property type="term" value="P:regulation of transcription by RNA polymerase II"/>
    <property type="evidence" value="ECO:0007669"/>
    <property type="project" value="InterPro"/>
</dbReference>
<dbReference type="CDD" id="cd20601">
    <property type="entry name" value="CYCLIN_AtRBR_like"/>
    <property type="match status" value="1"/>
</dbReference>
<dbReference type="FunFam" id="1.10.472.10:FF:000030">
    <property type="entry name" value="Retinoblastoma-related protein 1"/>
    <property type="match status" value="1"/>
</dbReference>
<dbReference type="FunFam" id="1.10.472.10:FF:000067">
    <property type="entry name" value="Retinoblastoma-related protein 1"/>
    <property type="match status" value="1"/>
</dbReference>
<dbReference type="FunFam" id="1.10.472.140:FF:000003">
    <property type="entry name" value="Retinoblastoma-related protein 1"/>
    <property type="match status" value="1"/>
</dbReference>
<dbReference type="Gene3D" id="1.10.472.140">
    <property type="match status" value="1"/>
</dbReference>
<dbReference type="Gene3D" id="1.10.472.10">
    <property type="entry name" value="Cyclin-like"/>
    <property type="match status" value="2"/>
</dbReference>
<dbReference type="InterPro" id="IPR036915">
    <property type="entry name" value="Cyclin-like_sf"/>
</dbReference>
<dbReference type="InterPro" id="IPR002720">
    <property type="entry name" value="RB_A"/>
</dbReference>
<dbReference type="InterPro" id="IPR002719">
    <property type="entry name" value="RB_B"/>
</dbReference>
<dbReference type="InterPro" id="IPR028309">
    <property type="entry name" value="RB_fam"/>
</dbReference>
<dbReference type="InterPro" id="IPR024599">
    <property type="entry name" value="RB_N"/>
</dbReference>
<dbReference type="PANTHER" id="PTHR13742:SF17">
    <property type="entry name" value="RE32990P-RELATED"/>
    <property type="match status" value="1"/>
</dbReference>
<dbReference type="PANTHER" id="PTHR13742">
    <property type="entry name" value="RETINOBLASTOMA-ASSOCIATED PROTEIN RB -RELATED"/>
    <property type="match status" value="1"/>
</dbReference>
<dbReference type="Pfam" id="PF11934">
    <property type="entry name" value="DUF3452"/>
    <property type="match status" value="1"/>
</dbReference>
<dbReference type="Pfam" id="PF01858">
    <property type="entry name" value="RB_A"/>
    <property type="match status" value="1"/>
</dbReference>
<dbReference type="Pfam" id="PF01857">
    <property type="entry name" value="RB_B"/>
    <property type="match status" value="1"/>
</dbReference>
<dbReference type="SMART" id="SM01367">
    <property type="entry name" value="DUF3452"/>
    <property type="match status" value="1"/>
</dbReference>
<dbReference type="SMART" id="SM01368">
    <property type="entry name" value="RB_A"/>
    <property type="match status" value="1"/>
</dbReference>
<dbReference type="SUPFAM" id="SSF47954">
    <property type="entry name" value="Cyclin-like"/>
    <property type="match status" value="2"/>
</dbReference>
<evidence type="ECO:0000250" key="1"/>
<evidence type="ECO:0000256" key="2">
    <source>
        <dbReference type="SAM" id="MobiDB-lite"/>
    </source>
</evidence>
<evidence type="ECO:0000305" key="3"/>
<name>RBR_SCUBA</name>
<accession>Q4JF75</accession>
<feature type="chain" id="PRO_0000380241" description="Retinoblastoma-related protein">
    <location>
        <begin position="1"/>
        <end position="1006"/>
    </location>
</feature>
<feature type="region of interest" description="Pocket" evidence="1">
    <location>
        <begin position="411"/>
        <end position="855"/>
    </location>
</feature>
<feature type="region of interest" description="Domain A" evidence="1">
    <location>
        <begin position="411"/>
        <end position="604"/>
    </location>
</feature>
<feature type="region of interest" description="Spacer" evidence="1">
    <location>
        <begin position="605"/>
        <end position="724"/>
    </location>
</feature>
<feature type="region of interest" description="Domain B" evidence="1">
    <location>
        <begin position="725"/>
        <end position="855"/>
    </location>
</feature>
<feature type="region of interest" description="Disordered" evidence="2">
    <location>
        <begin position="866"/>
        <end position="898"/>
    </location>
</feature>
<feature type="compositionally biased region" description="Polar residues" evidence="2">
    <location>
        <begin position="866"/>
        <end position="893"/>
    </location>
</feature>
<sequence length="1006" mass="111795">MTELKKIPSPSHPADEGGNTIEARFAHFSKNDLRLDDDKFLAQATKLLDESKHLLMANVPALGTGTLDEAERYWFAFVLYSVRKLSENGDSVEKGLNLCQILRAARLNIDDFYKELYQFLIKVGSILSNLYGGDWQKRLEAKESHTNFVHLFCLSKKYKNAYRELFSIVNANNDKQLNVANASGCESDYYRFGWLLFLALRVHVFRPCKTLVSCTHGLVSVLAILLIHVPAHFRNLNLNDSERIVMRGDKADLVASLCNMYGTSEDELRKTLEKANNLITDILKKKPCLASECKPANLENIVTDGLVYFEGLMDESSLSSSIYLLEKDYDAATHDMDGLDEMIFLNENDSLLGSGSLSGGATNSYGNGTKRKLDAMSSPAKTITSPLSPHRSPICHSNGFIVGGISKMASTPVTTAMTTAKWLRTVIAPLPSKPSAELEKFLTSCDRDVTPDVTRRAQIILEAIFPSSGLGQNASLMDNIWAEQRRMEAMKLYFRVLQALCTAESQILHANNLTSLLTNERFHRCMLACSAELVLATHKTVTMLFPTVLERTGITAFDLSKVIESFIRHEESLPRELRRHLNSLEERLLESMVWEKGSSMYNSLIVARPALSAEISRLGLLAEPMPSLDAIAMHNNMSCGVLPPMQALLKHEKHGQNGDIRSPKRVCTEYRSVLVERNSFTSPVKDRLLALNNLKSKFPPPILHSAFASPTRPSPGGGGETCAETAVNVFFSKIVKLAAVRINGMVERLQLSQQIRESVYCLFQKILSQRTTLFFNRHIDQILLCCFYGVSKISQLTLTFKEIIFNYRKQPQCKPQVFRNVYVDWKALRRTGKSGPDHVDIITFYNEIFVPAVKPLLVEIAPGGSAQSGSQVPEAKNNTNGVNPSSPRTSSFPSLPDMSPKKVSAAHNVYVSPLRSSKMDALISHSSRSYYACVGESTHAYQSPSKDLTAINNRLNGNRKVRGTLNFDDVDVGLVTDSVVANSLYVQNGSCASSSHMVVKSEQQDS</sequence>
<proteinExistence type="evidence at transcript level"/>
<protein>
    <recommendedName>
        <fullName>Retinoblastoma-related protein</fullName>
    </recommendedName>
</protein>
<comment type="function">
    <text evidence="1">Regulator of biological processes that recruits a histone deacetylase to control gene transcription. May play a role in the entry into mitosis, negatively regulating the cell proliferation. Formation of stable complexes with geminiviridae replication-associated proteins may create a cellular environment which favors viral DNA replication (By similarity).</text>
</comment>
<comment type="subcellular location">
    <subcellularLocation>
        <location evidence="1">Nucleus</location>
    </subcellularLocation>
</comment>
<comment type="similarity">
    <text evidence="3">Belongs to the retinoblastoma protein (RB) family.</text>
</comment>